<accession>B3NYS4</accession>
<dbReference type="EC" id="2.7.1.107"/>
<dbReference type="EMBL" id="CH954181">
    <property type="protein sequence ID" value="EDV48187.1"/>
    <property type="status" value="ALT_SEQ"/>
    <property type="molecule type" value="Genomic_DNA"/>
</dbReference>
<dbReference type="RefSeq" id="XP_001979229.2">
    <property type="nucleotide sequence ID" value="XM_001979193.2"/>
</dbReference>
<dbReference type="SMR" id="B3NYS4"/>
<dbReference type="eggNOG" id="KOG1170">
    <property type="taxonomic scope" value="Eukaryota"/>
</dbReference>
<dbReference type="OrthoDB" id="196165at2759"/>
<dbReference type="Proteomes" id="UP000008711">
    <property type="component" value="Unassembled WGS sequence"/>
</dbReference>
<dbReference type="GO" id="GO:0005737">
    <property type="term" value="C:cytoplasm"/>
    <property type="evidence" value="ECO:0007669"/>
    <property type="project" value="UniProtKB-SubCell"/>
</dbReference>
<dbReference type="GO" id="GO:0005886">
    <property type="term" value="C:plasma membrane"/>
    <property type="evidence" value="ECO:0007669"/>
    <property type="project" value="TreeGrafter"/>
</dbReference>
<dbReference type="GO" id="GO:0005524">
    <property type="term" value="F:ATP binding"/>
    <property type="evidence" value="ECO:0007669"/>
    <property type="project" value="UniProtKB-KW"/>
</dbReference>
<dbReference type="GO" id="GO:0004143">
    <property type="term" value="F:ATP-dependent diacylglycerol kinase activity"/>
    <property type="evidence" value="ECO:0007669"/>
    <property type="project" value="UniProtKB-EC"/>
</dbReference>
<dbReference type="GO" id="GO:0008270">
    <property type="term" value="F:zinc ion binding"/>
    <property type="evidence" value="ECO:0007669"/>
    <property type="project" value="UniProtKB-KW"/>
</dbReference>
<dbReference type="GO" id="GO:0046486">
    <property type="term" value="P:glycerolipid metabolic process"/>
    <property type="evidence" value="ECO:0007669"/>
    <property type="project" value="UniProtKB-ARBA"/>
</dbReference>
<dbReference type="GO" id="GO:0007200">
    <property type="term" value="P:phospholipase C-activating G protein-coupled receptor signaling pathway"/>
    <property type="evidence" value="ECO:0007669"/>
    <property type="project" value="InterPro"/>
</dbReference>
<dbReference type="CDD" id="cd20800">
    <property type="entry name" value="C1_DGK_typeII_rpt1"/>
    <property type="match status" value="1"/>
</dbReference>
<dbReference type="CDD" id="cd20852">
    <property type="entry name" value="C1_DGK_typeII_rpt2"/>
    <property type="match status" value="1"/>
</dbReference>
<dbReference type="CDD" id="cd13274">
    <property type="entry name" value="PH_DGK_type2"/>
    <property type="match status" value="1"/>
</dbReference>
<dbReference type="CDD" id="cd09507">
    <property type="entry name" value="SAM_DGK-delta-eta"/>
    <property type="match status" value="1"/>
</dbReference>
<dbReference type="FunFam" id="1.10.150.50:FF:000021">
    <property type="entry name" value="Diacylglycerol kinase"/>
    <property type="match status" value="1"/>
</dbReference>
<dbReference type="FunFam" id="2.30.29.30:FF:000313">
    <property type="entry name" value="Diacylglycerol kinase"/>
    <property type="match status" value="1"/>
</dbReference>
<dbReference type="FunFam" id="2.60.200.40:FF:000001">
    <property type="entry name" value="Diacylglycerol kinase"/>
    <property type="match status" value="1"/>
</dbReference>
<dbReference type="FunFam" id="3.30.60.20:FF:000002">
    <property type="entry name" value="Diacylglycerol kinase"/>
    <property type="match status" value="1"/>
</dbReference>
<dbReference type="FunFam" id="3.30.60.20:FF:000029">
    <property type="entry name" value="Diacylglycerol kinase"/>
    <property type="match status" value="1"/>
</dbReference>
<dbReference type="FunFam" id="3.40.50.10330:FF:000001">
    <property type="entry name" value="Diacylglycerol kinase"/>
    <property type="match status" value="1"/>
</dbReference>
<dbReference type="Gene3D" id="2.60.200.40">
    <property type="match status" value="1"/>
</dbReference>
<dbReference type="Gene3D" id="3.30.60.20">
    <property type="match status" value="2"/>
</dbReference>
<dbReference type="Gene3D" id="2.30.29.30">
    <property type="entry name" value="Pleckstrin-homology domain (PH domain)/Phosphotyrosine-binding domain (PTB)"/>
    <property type="match status" value="1"/>
</dbReference>
<dbReference type="Gene3D" id="3.40.50.10330">
    <property type="entry name" value="Probable inorganic polyphosphate/atp-NAD kinase, domain 1"/>
    <property type="match status" value="1"/>
</dbReference>
<dbReference type="Gene3D" id="1.10.150.50">
    <property type="entry name" value="Transcription Factor, Ets-1"/>
    <property type="match status" value="1"/>
</dbReference>
<dbReference type="InterPro" id="IPR017438">
    <property type="entry name" value="ATP-NAD_kinase_N"/>
</dbReference>
<dbReference type="InterPro" id="IPR046349">
    <property type="entry name" value="C1-like_sf"/>
</dbReference>
<dbReference type="InterPro" id="IPR037607">
    <property type="entry name" value="DGK"/>
</dbReference>
<dbReference type="InterPro" id="IPR054474">
    <property type="entry name" value="DGKD_4H"/>
</dbReference>
<dbReference type="InterPro" id="IPR000756">
    <property type="entry name" value="Diacylglycerol_kin_accessory"/>
</dbReference>
<dbReference type="InterPro" id="IPR001206">
    <property type="entry name" value="Diacylglycerol_kinase_cat_dom"/>
</dbReference>
<dbReference type="InterPro" id="IPR016064">
    <property type="entry name" value="NAD/diacylglycerol_kinase_sf"/>
</dbReference>
<dbReference type="InterPro" id="IPR002219">
    <property type="entry name" value="PE/DAG-bd"/>
</dbReference>
<dbReference type="InterPro" id="IPR011993">
    <property type="entry name" value="PH-like_dom_sf"/>
</dbReference>
<dbReference type="InterPro" id="IPR001849">
    <property type="entry name" value="PH_domain"/>
</dbReference>
<dbReference type="InterPro" id="IPR001660">
    <property type="entry name" value="SAM"/>
</dbReference>
<dbReference type="InterPro" id="IPR013761">
    <property type="entry name" value="SAM/pointed_sf"/>
</dbReference>
<dbReference type="PANTHER" id="PTHR11255">
    <property type="entry name" value="DIACYLGLYCEROL KINASE"/>
    <property type="match status" value="1"/>
</dbReference>
<dbReference type="PANTHER" id="PTHR11255:SF109">
    <property type="entry name" value="DIACYLGLYCEROL KINASE ETA"/>
    <property type="match status" value="1"/>
</dbReference>
<dbReference type="Pfam" id="PF00130">
    <property type="entry name" value="C1_1"/>
    <property type="match status" value="2"/>
</dbReference>
<dbReference type="Pfam" id="PF00609">
    <property type="entry name" value="DAGK_acc"/>
    <property type="match status" value="1"/>
</dbReference>
<dbReference type="Pfam" id="PF00781">
    <property type="entry name" value="DAGK_cat"/>
    <property type="match status" value="1"/>
</dbReference>
<dbReference type="Pfam" id="PF22944">
    <property type="entry name" value="DGKD_4H"/>
    <property type="match status" value="1"/>
</dbReference>
<dbReference type="Pfam" id="PF00169">
    <property type="entry name" value="PH"/>
    <property type="match status" value="1"/>
</dbReference>
<dbReference type="Pfam" id="PF00536">
    <property type="entry name" value="SAM_1"/>
    <property type="match status" value="1"/>
</dbReference>
<dbReference type="SMART" id="SM00109">
    <property type="entry name" value="C1"/>
    <property type="match status" value="2"/>
</dbReference>
<dbReference type="SMART" id="SM00045">
    <property type="entry name" value="DAGKa"/>
    <property type="match status" value="1"/>
</dbReference>
<dbReference type="SMART" id="SM00046">
    <property type="entry name" value="DAGKc"/>
    <property type="match status" value="1"/>
</dbReference>
<dbReference type="SMART" id="SM00233">
    <property type="entry name" value="PH"/>
    <property type="match status" value="1"/>
</dbReference>
<dbReference type="SMART" id="SM00454">
    <property type="entry name" value="SAM"/>
    <property type="match status" value="1"/>
</dbReference>
<dbReference type="SUPFAM" id="SSF57889">
    <property type="entry name" value="Cysteine-rich domain"/>
    <property type="match status" value="2"/>
</dbReference>
<dbReference type="SUPFAM" id="SSF111331">
    <property type="entry name" value="NAD kinase/diacylglycerol kinase-like"/>
    <property type="match status" value="2"/>
</dbReference>
<dbReference type="SUPFAM" id="SSF50729">
    <property type="entry name" value="PH domain-like"/>
    <property type="match status" value="1"/>
</dbReference>
<dbReference type="SUPFAM" id="SSF47769">
    <property type="entry name" value="SAM/Pointed domain"/>
    <property type="match status" value="1"/>
</dbReference>
<dbReference type="PROSITE" id="PS50146">
    <property type="entry name" value="DAGK"/>
    <property type="match status" value="1"/>
</dbReference>
<dbReference type="PROSITE" id="PS50003">
    <property type="entry name" value="PH_DOMAIN"/>
    <property type="match status" value="1"/>
</dbReference>
<dbReference type="PROSITE" id="PS50105">
    <property type="entry name" value="SAM_DOMAIN"/>
    <property type="match status" value="1"/>
</dbReference>
<dbReference type="PROSITE" id="PS00479">
    <property type="entry name" value="ZF_DAG_PE_1"/>
    <property type="match status" value="2"/>
</dbReference>
<dbReference type="PROSITE" id="PS50081">
    <property type="entry name" value="ZF_DAG_PE_2"/>
    <property type="match status" value="2"/>
</dbReference>
<evidence type="ECO:0000250" key="1">
    <source>
        <dbReference type="UniProtKB" id="Q86XP1"/>
    </source>
</evidence>
<evidence type="ECO:0000255" key="2"/>
<evidence type="ECO:0000255" key="3">
    <source>
        <dbReference type="PROSITE-ProRule" id="PRU00145"/>
    </source>
</evidence>
<evidence type="ECO:0000255" key="4">
    <source>
        <dbReference type="PROSITE-ProRule" id="PRU00184"/>
    </source>
</evidence>
<evidence type="ECO:0000255" key="5">
    <source>
        <dbReference type="PROSITE-ProRule" id="PRU00226"/>
    </source>
</evidence>
<evidence type="ECO:0000255" key="6">
    <source>
        <dbReference type="PROSITE-ProRule" id="PRU00783"/>
    </source>
</evidence>
<evidence type="ECO:0000256" key="7">
    <source>
        <dbReference type="SAM" id="MobiDB-lite"/>
    </source>
</evidence>
<evidence type="ECO:0000305" key="8"/>
<evidence type="ECO:0000312" key="9">
    <source>
        <dbReference type="EMBL" id="EDV48187.1"/>
    </source>
</evidence>
<organism>
    <name type="scientific">Drosophila erecta</name>
    <name type="common">Fruit fly</name>
    <dbReference type="NCBI Taxonomy" id="7220"/>
    <lineage>
        <taxon>Eukaryota</taxon>
        <taxon>Metazoa</taxon>
        <taxon>Ecdysozoa</taxon>
        <taxon>Arthropoda</taxon>
        <taxon>Hexapoda</taxon>
        <taxon>Insecta</taxon>
        <taxon>Pterygota</taxon>
        <taxon>Neoptera</taxon>
        <taxon>Endopterygota</taxon>
        <taxon>Diptera</taxon>
        <taxon>Brachycera</taxon>
        <taxon>Muscomorpha</taxon>
        <taxon>Ephydroidea</taxon>
        <taxon>Drosophilidae</taxon>
        <taxon>Drosophila</taxon>
        <taxon>Sophophora</taxon>
    </lineage>
</organism>
<gene>
    <name type="ORF">GG14241</name>
</gene>
<comment type="function">
    <text evidence="1">Phosphorylates diacylglycerol (DAG) to generate phosphatidic acid (PA).</text>
</comment>
<comment type="catalytic activity">
    <reaction>
        <text>a 1,2-diacyl-sn-glycerol + ATP = a 1,2-diacyl-sn-glycero-3-phosphate + ADP + H(+)</text>
        <dbReference type="Rhea" id="RHEA:10272"/>
        <dbReference type="ChEBI" id="CHEBI:15378"/>
        <dbReference type="ChEBI" id="CHEBI:17815"/>
        <dbReference type="ChEBI" id="CHEBI:30616"/>
        <dbReference type="ChEBI" id="CHEBI:58608"/>
        <dbReference type="ChEBI" id="CHEBI:456216"/>
        <dbReference type="EC" id="2.7.1.107"/>
    </reaction>
</comment>
<comment type="subcellular location">
    <subcellularLocation>
        <location evidence="1">Cytoplasm</location>
    </subcellularLocation>
</comment>
<comment type="similarity">
    <text evidence="2">Belongs to the eukaryotic diacylglycerol kinase family.</text>
</comment>
<comment type="sequence caution" evidence="8">
    <conflict type="erroneous gene model prediction">
        <sequence resource="EMBL-CDS" id="EDV48187"/>
    </conflict>
</comment>
<sequence>MAHLKLDTLHVQRSPRGSRRSSPSSGRSSACSSGSISPVPIIPIISISHDGDESESESEIETEPVRLFQRRMSTKCTNNLAAIIKEGFLLKHTWSFQRWRRRYFRLKRNMLFYAKDEKCDVFDDIDLSDLCYFECGIKNVNHSFQIITPTRSLVLCAESRREMEDWLGGLKTATAPQRPRGDSFLIEQHDILSNHHHWYATSHARPTYCNVCRDALSGVTSHGLSCEVCKCKVHKRCAAKSIANCKWTTLASVGKDIIEQADGSIIMPHQWMEGNLPVSSMCAVCKKTCGSVLRLQDWRCLWCRATVHVACRPQMAVACPIGPAKLSVVPPTSVHSISTDDAWDVASPKGNFSPLLVFVNSKSGDNQGVKFLRRFKQLLNPAQVFDLISTGPSLGLRLFRHFEMFRILVCSGDGSVGWVLSEIDRFNMHKQCQVAVMPLGTGNDLARVLGWGSSCDDDTHLPQILERYESASTKMLDRWSIMVFEKAIPVPKTPKMSISTEQEAMLTGMVTSANHHLRFIVETNDTQTLISSTRNLCDTVDDLVCRISEHHKEDEQLAVKCDILRQKLNMLLDALQEEEIGAHSGDDLIATIRSLITRSIPVTPGSNAYLLNPNISIEKTEKDQINTKERRNSRSLRSSEKEALQCRANSVKRAIYNVVEHSEPGRPKRYQRKLSITPFEALKLPTTASGESTPCTSPLPIIPPINIISPTMETSRLTCISPLPDTRRDSVDENFFNSINLPAPRQFADSRRSSGVPEVIQEIEEGANGETVYRRSRMSLTGGANIDDAGNRLSPCSDGGENTPTERKVDFLRVPIHTGEPIVDPLCDYRPHEVFERTYYMTREMDKDKEKDKEKEKEKTAEIEEENDKCVEKLGSIPAEKLVHTCNLQVPGVVVTPNPQNVYSSASITIIDTDAQTTTEQSSSDDLGGEASDVLSAISNEECSVASEIFDKQDAGQTVGDIIQNMDASNFTHIDSPETSDETEAMPGESLMDDISSVLGHDITYALQDNTLTDDTTTLCSEHAGPPKPPRKKSLSALSRTQAHPRRRNSSPPRTARLARMDSDDNPQQFGFENIVFEIDNRCDDQKMREPPRYCSLAQFVEGNDIARQSFKQLMLEQHRGGDNDIESPEQQQAPTNKGAHLLATTSEDELSTQTAIKIEIHDIDATVRSINSSMKPNTILTTSTSPTKKSGHGQDISVVVRPPTPLRGDSIKPTVSLLPVSSGGAMAVSMTCSGMLGVRAMNASEIRRHSSHAPSLAVREFDKDKDRRHSGFNPNQLTLDPEHARFLSSSPAASRRISCGSLFKKKNKKIATKRSYGLFSVRFFVVAEPDFRLATLALIRPLIPLPNEALPNLQTLKGSKSSLFMGSTLFGFDHLASAERDKEERGGKDKDKTPTEEANRKLPIINPLVRLPNWPNLANGGGFISKCLLANADTLCAAVSPLMDPDETLLAGYHEKCVMNNYFGIGIDAKISLDFHNKREEHPEKCRSRARNYMWYGVLGSKQLLQKTCKNLEQRVQLECDGQRIPLPELQGIVILNIPSFMGGTNFWGSSTKKDDIFLPPSFDDRVLEVVAVFGSVQMAASRLINLQHHRIAQCQSVQINILGDEEIPIQVDGEAWLQPPGMIRILHKNRVQMLCRNRSLELSLKSWHEKQRQHSISIQRDASSTASEHANSTDEVISERECYVLLNFIEAVSSLVKWVKFLIISHPALQHDLYEVACRASEALESIHPQGKLLEGPSLRTKLVEVIDSSRQLYDDACTLLRDRGHSLILREDLETKLSAALANMEMELKKCSVQKCIDGKLRAYFNVLAPNEESDGRRKSRPFWVRLRSGSTAGQQVFKPPLTNTREAANNWSVNEVVTWLETMQLSEYVDSFLKNDIRGKELLTLGRRDLKDLGVVKVGHVKRILQAIKDLSEN</sequence>
<feature type="chain" id="PRO_0000375985" description="Diacylglycerol kinase eta">
    <location>
        <begin position="1"/>
        <end position="1918"/>
    </location>
</feature>
<feature type="domain" description="PH" evidence="3">
    <location>
        <begin position="82"/>
        <end position="175"/>
    </location>
</feature>
<feature type="domain" description="DAGKc" evidence="6">
    <location>
        <begin position="350"/>
        <end position="486"/>
    </location>
</feature>
<feature type="domain" description="SAM" evidence="4">
    <location>
        <begin position="1855"/>
        <end position="1918"/>
    </location>
</feature>
<feature type="zinc finger region" description="Phorbol-ester/DAG-type 1" evidence="5">
    <location>
        <begin position="195"/>
        <end position="245"/>
    </location>
</feature>
<feature type="zinc finger region" description="Phorbol-ester/DAG-type 2" evidence="5">
    <location>
        <begin position="268"/>
        <end position="319"/>
    </location>
</feature>
<feature type="region of interest" description="Disordered" evidence="7">
    <location>
        <begin position="1"/>
        <end position="37"/>
    </location>
</feature>
<feature type="region of interest" description="Disordered" evidence="7">
    <location>
        <begin position="783"/>
        <end position="805"/>
    </location>
</feature>
<feature type="region of interest" description="Disordered" evidence="7">
    <location>
        <begin position="1017"/>
        <end position="1067"/>
    </location>
</feature>
<feature type="region of interest" description="Disordered" evidence="7">
    <location>
        <begin position="1177"/>
        <end position="1212"/>
    </location>
</feature>
<feature type="region of interest" description="Disordered" evidence="7">
    <location>
        <begin position="1380"/>
        <end position="1399"/>
    </location>
</feature>
<feature type="compositionally biased region" description="Basic and acidic residues" evidence="7">
    <location>
        <begin position="1"/>
        <end position="10"/>
    </location>
</feature>
<feature type="compositionally biased region" description="Low complexity" evidence="7">
    <location>
        <begin position="20"/>
        <end position="37"/>
    </location>
</feature>
<feature type="compositionally biased region" description="Polar residues" evidence="7">
    <location>
        <begin position="1177"/>
        <end position="1189"/>
    </location>
</feature>
<name>DGKH_DROER</name>
<reference evidence="9" key="1">
    <citation type="journal article" date="2007" name="Nature">
        <title>Evolution of genes and genomes on the Drosophila phylogeny.</title>
        <authorList>
            <consortium name="Drosophila 12 genomes consortium"/>
        </authorList>
    </citation>
    <scope>NUCLEOTIDE SEQUENCE [LARGE SCALE GENOMIC DNA]</scope>
    <source>
        <strain evidence="9">Tucson 14021-0224.01</strain>
    </source>
</reference>
<protein>
    <recommendedName>
        <fullName evidence="1">Diacylglycerol kinase eta</fullName>
        <shortName evidence="1">DAG kinase eta</shortName>
        <ecNumber>2.7.1.107</ecNumber>
    </recommendedName>
</protein>
<keyword id="KW-0067">ATP-binding</keyword>
<keyword id="KW-0963">Cytoplasm</keyword>
<keyword id="KW-0418">Kinase</keyword>
<keyword id="KW-0479">Metal-binding</keyword>
<keyword id="KW-0547">Nucleotide-binding</keyword>
<keyword id="KW-0597">Phosphoprotein</keyword>
<keyword id="KW-0677">Repeat</keyword>
<keyword id="KW-0808">Transferase</keyword>
<keyword id="KW-0862">Zinc</keyword>
<keyword id="KW-0863">Zinc-finger</keyword>
<proteinExistence type="inferred from homology"/>